<dbReference type="EC" id="3.1.26.3" evidence="1"/>
<dbReference type="EMBL" id="AE017355">
    <property type="protein sequence ID" value="AAT60616.1"/>
    <property type="molecule type" value="Genomic_DNA"/>
</dbReference>
<dbReference type="RefSeq" id="YP_037910.1">
    <property type="nucleotide sequence ID" value="NC_005957.1"/>
</dbReference>
<dbReference type="SMR" id="Q6HEW6"/>
<dbReference type="KEGG" id="btk:BT9727_3590"/>
<dbReference type="PATRIC" id="fig|281309.8.peg.3828"/>
<dbReference type="HOGENOM" id="CLU_000907_1_3_9"/>
<dbReference type="Proteomes" id="UP000001301">
    <property type="component" value="Chromosome"/>
</dbReference>
<dbReference type="GO" id="GO:0005737">
    <property type="term" value="C:cytoplasm"/>
    <property type="evidence" value="ECO:0007669"/>
    <property type="project" value="UniProtKB-SubCell"/>
</dbReference>
<dbReference type="GO" id="GO:0003725">
    <property type="term" value="F:double-stranded RNA binding"/>
    <property type="evidence" value="ECO:0007669"/>
    <property type="project" value="TreeGrafter"/>
</dbReference>
<dbReference type="GO" id="GO:0046872">
    <property type="term" value="F:metal ion binding"/>
    <property type="evidence" value="ECO:0007669"/>
    <property type="project" value="UniProtKB-KW"/>
</dbReference>
<dbReference type="GO" id="GO:0004525">
    <property type="term" value="F:ribonuclease III activity"/>
    <property type="evidence" value="ECO:0007669"/>
    <property type="project" value="UniProtKB-UniRule"/>
</dbReference>
<dbReference type="GO" id="GO:0019843">
    <property type="term" value="F:rRNA binding"/>
    <property type="evidence" value="ECO:0007669"/>
    <property type="project" value="UniProtKB-KW"/>
</dbReference>
<dbReference type="GO" id="GO:0006397">
    <property type="term" value="P:mRNA processing"/>
    <property type="evidence" value="ECO:0007669"/>
    <property type="project" value="UniProtKB-UniRule"/>
</dbReference>
<dbReference type="GO" id="GO:0010468">
    <property type="term" value="P:regulation of gene expression"/>
    <property type="evidence" value="ECO:0007669"/>
    <property type="project" value="TreeGrafter"/>
</dbReference>
<dbReference type="GO" id="GO:0006364">
    <property type="term" value="P:rRNA processing"/>
    <property type="evidence" value="ECO:0007669"/>
    <property type="project" value="UniProtKB-UniRule"/>
</dbReference>
<dbReference type="GO" id="GO:0008033">
    <property type="term" value="P:tRNA processing"/>
    <property type="evidence" value="ECO:0007669"/>
    <property type="project" value="UniProtKB-KW"/>
</dbReference>
<dbReference type="CDD" id="cd10845">
    <property type="entry name" value="DSRM_RNAse_III_family"/>
    <property type="match status" value="1"/>
</dbReference>
<dbReference type="CDD" id="cd00593">
    <property type="entry name" value="RIBOc"/>
    <property type="match status" value="1"/>
</dbReference>
<dbReference type="FunFam" id="1.10.1520.10:FF:000001">
    <property type="entry name" value="Ribonuclease 3"/>
    <property type="match status" value="1"/>
</dbReference>
<dbReference type="FunFam" id="3.30.160.20:FF:000003">
    <property type="entry name" value="Ribonuclease 3"/>
    <property type="match status" value="1"/>
</dbReference>
<dbReference type="Gene3D" id="3.30.160.20">
    <property type="match status" value="1"/>
</dbReference>
<dbReference type="Gene3D" id="1.10.1520.10">
    <property type="entry name" value="Ribonuclease III domain"/>
    <property type="match status" value="1"/>
</dbReference>
<dbReference type="HAMAP" id="MF_00104">
    <property type="entry name" value="RNase_III"/>
    <property type="match status" value="1"/>
</dbReference>
<dbReference type="InterPro" id="IPR014720">
    <property type="entry name" value="dsRBD_dom"/>
</dbReference>
<dbReference type="InterPro" id="IPR011907">
    <property type="entry name" value="RNase_III"/>
</dbReference>
<dbReference type="InterPro" id="IPR000999">
    <property type="entry name" value="RNase_III_dom"/>
</dbReference>
<dbReference type="InterPro" id="IPR036389">
    <property type="entry name" value="RNase_III_sf"/>
</dbReference>
<dbReference type="NCBIfam" id="TIGR02191">
    <property type="entry name" value="RNaseIII"/>
    <property type="match status" value="1"/>
</dbReference>
<dbReference type="PANTHER" id="PTHR11207:SF0">
    <property type="entry name" value="RIBONUCLEASE 3"/>
    <property type="match status" value="1"/>
</dbReference>
<dbReference type="PANTHER" id="PTHR11207">
    <property type="entry name" value="RIBONUCLEASE III"/>
    <property type="match status" value="1"/>
</dbReference>
<dbReference type="Pfam" id="PF00035">
    <property type="entry name" value="dsrm"/>
    <property type="match status" value="1"/>
</dbReference>
<dbReference type="Pfam" id="PF14622">
    <property type="entry name" value="Ribonucleas_3_3"/>
    <property type="match status" value="1"/>
</dbReference>
<dbReference type="SMART" id="SM00358">
    <property type="entry name" value="DSRM"/>
    <property type="match status" value="1"/>
</dbReference>
<dbReference type="SMART" id="SM00535">
    <property type="entry name" value="RIBOc"/>
    <property type="match status" value="1"/>
</dbReference>
<dbReference type="SUPFAM" id="SSF54768">
    <property type="entry name" value="dsRNA-binding domain-like"/>
    <property type="match status" value="1"/>
</dbReference>
<dbReference type="SUPFAM" id="SSF69065">
    <property type="entry name" value="RNase III domain-like"/>
    <property type="match status" value="1"/>
</dbReference>
<dbReference type="PROSITE" id="PS50137">
    <property type="entry name" value="DS_RBD"/>
    <property type="match status" value="1"/>
</dbReference>
<dbReference type="PROSITE" id="PS00517">
    <property type="entry name" value="RNASE_3_1"/>
    <property type="match status" value="1"/>
</dbReference>
<dbReference type="PROSITE" id="PS50142">
    <property type="entry name" value="RNASE_3_2"/>
    <property type="match status" value="1"/>
</dbReference>
<reference key="1">
    <citation type="journal article" date="2006" name="J. Bacteriol.">
        <title>Pathogenomic sequence analysis of Bacillus cereus and Bacillus thuringiensis isolates closely related to Bacillus anthracis.</title>
        <authorList>
            <person name="Han C.S."/>
            <person name="Xie G."/>
            <person name="Challacombe J.F."/>
            <person name="Altherr M.R."/>
            <person name="Bhotika S.S."/>
            <person name="Bruce D."/>
            <person name="Campbell C.S."/>
            <person name="Campbell M.L."/>
            <person name="Chen J."/>
            <person name="Chertkov O."/>
            <person name="Cleland C."/>
            <person name="Dimitrijevic M."/>
            <person name="Doggett N.A."/>
            <person name="Fawcett J.J."/>
            <person name="Glavina T."/>
            <person name="Goodwin L.A."/>
            <person name="Hill K.K."/>
            <person name="Hitchcock P."/>
            <person name="Jackson P.J."/>
            <person name="Keim P."/>
            <person name="Kewalramani A.R."/>
            <person name="Longmire J."/>
            <person name="Lucas S."/>
            <person name="Malfatti S."/>
            <person name="McMurry K."/>
            <person name="Meincke L.J."/>
            <person name="Misra M."/>
            <person name="Moseman B.L."/>
            <person name="Mundt M."/>
            <person name="Munk A.C."/>
            <person name="Okinaka R.T."/>
            <person name="Parson-Quintana B."/>
            <person name="Reilly L.P."/>
            <person name="Richardson P."/>
            <person name="Robinson D.L."/>
            <person name="Rubin E."/>
            <person name="Saunders E."/>
            <person name="Tapia R."/>
            <person name="Tesmer J.G."/>
            <person name="Thayer N."/>
            <person name="Thompson L.S."/>
            <person name="Tice H."/>
            <person name="Ticknor L.O."/>
            <person name="Wills P.L."/>
            <person name="Brettin T.S."/>
            <person name="Gilna P."/>
        </authorList>
    </citation>
    <scope>NUCLEOTIDE SEQUENCE [LARGE SCALE GENOMIC DNA]</scope>
    <source>
        <strain>97-27</strain>
    </source>
</reference>
<keyword id="KW-0963">Cytoplasm</keyword>
<keyword id="KW-0255">Endonuclease</keyword>
<keyword id="KW-0378">Hydrolase</keyword>
<keyword id="KW-0460">Magnesium</keyword>
<keyword id="KW-0479">Metal-binding</keyword>
<keyword id="KW-0507">mRNA processing</keyword>
<keyword id="KW-0540">Nuclease</keyword>
<keyword id="KW-0694">RNA-binding</keyword>
<keyword id="KW-0698">rRNA processing</keyword>
<keyword id="KW-0699">rRNA-binding</keyword>
<keyword id="KW-0819">tRNA processing</keyword>
<evidence type="ECO:0000255" key="1">
    <source>
        <dbReference type="HAMAP-Rule" id="MF_00104"/>
    </source>
</evidence>
<protein>
    <recommendedName>
        <fullName evidence="1">Ribonuclease 3</fullName>
        <ecNumber evidence="1">3.1.26.3</ecNumber>
    </recommendedName>
    <alternativeName>
        <fullName evidence="1">Ribonuclease III</fullName>
        <shortName evidence="1">RNase III</shortName>
    </alternativeName>
</protein>
<accession>Q6HEW6</accession>
<organism>
    <name type="scientific">Bacillus thuringiensis subsp. konkukian (strain 97-27)</name>
    <dbReference type="NCBI Taxonomy" id="281309"/>
    <lineage>
        <taxon>Bacteria</taxon>
        <taxon>Bacillati</taxon>
        <taxon>Bacillota</taxon>
        <taxon>Bacilli</taxon>
        <taxon>Bacillales</taxon>
        <taxon>Bacillaceae</taxon>
        <taxon>Bacillus</taxon>
        <taxon>Bacillus cereus group</taxon>
    </lineage>
</organism>
<proteinExistence type="inferred from homology"/>
<comment type="function">
    <text evidence="1">Digests double-stranded RNA. Involved in the processing of primary rRNA transcript to yield the immediate precursors to the large and small rRNAs (23S and 16S). Processes some mRNAs, and tRNAs when they are encoded in the rRNA operon. Processes pre-crRNA and tracrRNA of type II CRISPR loci if present in the organism.</text>
</comment>
<comment type="catalytic activity">
    <reaction evidence="1">
        <text>Endonucleolytic cleavage to 5'-phosphomonoester.</text>
        <dbReference type="EC" id="3.1.26.3"/>
    </reaction>
</comment>
<comment type="cofactor">
    <cofactor evidence="1">
        <name>Mg(2+)</name>
        <dbReference type="ChEBI" id="CHEBI:18420"/>
    </cofactor>
</comment>
<comment type="subunit">
    <text evidence="1">Homodimer.</text>
</comment>
<comment type="subcellular location">
    <subcellularLocation>
        <location evidence="1">Cytoplasm</location>
    </subcellularLocation>
</comment>
<comment type="similarity">
    <text evidence="1">Belongs to the ribonuclease III family.</text>
</comment>
<name>RNC_BACHK</name>
<sequence length="245" mass="27993">MPYRKYREKKYETKYREAFKLFQEKIGITFTDEKLLIQAFTHSSYVNEHRKKPHEDNERLEFLGDAVLELTVSQYLFQKYPTMSEGELTKLRAAIVCEPSLVRFANELSFGSLVLLGKGEEMTGGRERPALLADVFEAFIGALYLDQGLETVWGFLKEIVYPKINEGAFSHVMDYKSQLQELIQRDGSGNIEYQILQEKGPAHNREFVSRVTLNNVALGLGSGKSKKEAEQQAAAEALKKLKEQL</sequence>
<feature type="chain" id="PRO_0000228495" description="Ribonuclease 3">
    <location>
        <begin position="1"/>
        <end position="245"/>
    </location>
</feature>
<feature type="domain" description="RNase III" evidence="1">
    <location>
        <begin position="19"/>
        <end position="148"/>
    </location>
</feature>
<feature type="domain" description="DRBM" evidence="1">
    <location>
        <begin position="174"/>
        <end position="243"/>
    </location>
</feature>
<feature type="active site" evidence="1">
    <location>
        <position position="65"/>
    </location>
</feature>
<feature type="active site" evidence="1">
    <location>
        <position position="137"/>
    </location>
</feature>
<feature type="binding site" evidence="1">
    <location>
        <position position="61"/>
    </location>
    <ligand>
        <name>Mg(2+)</name>
        <dbReference type="ChEBI" id="CHEBI:18420"/>
    </ligand>
</feature>
<feature type="binding site" evidence="1">
    <location>
        <position position="134"/>
    </location>
    <ligand>
        <name>Mg(2+)</name>
        <dbReference type="ChEBI" id="CHEBI:18420"/>
    </ligand>
</feature>
<feature type="binding site" evidence="1">
    <location>
        <position position="137"/>
    </location>
    <ligand>
        <name>Mg(2+)</name>
        <dbReference type="ChEBI" id="CHEBI:18420"/>
    </ligand>
</feature>
<gene>
    <name evidence="1" type="primary">rnc</name>
    <name type="ordered locus">BT9727_3590</name>
</gene>